<protein>
    <recommendedName>
        <fullName evidence="1">NADH-quinone oxidoreductase subunit N</fullName>
        <ecNumber evidence="1">7.1.1.-</ecNumber>
    </recommendedName>
    <alternativeName>
        <fullName evidence="1">NADH dehydrogenase I subunit N</fullName>
    </alternativeName>
    <alternativeName>
        <fullName evidence="1">NDH-1 subunit N</fullName>
    </alternativeName>
</protein>
<dbReference type="EC" id="7.1.1.-" evidence="1"/>
<dbReference type="EMBL" id="CP000544">
    <property type="protein sequence ID" value="ABM62516.1"/>
    <property type="molecule type" value="Genomic_DNA"/>
</dbReference>
<dbReference type="RefSeq" id="WP_011814538.1">
    <property type="nucleotide sequence ID" value="NC_008789.1"/>
</dbReference>
<dbReference type="SMR" id="A1WXV4"/>
<dbReference type="STRING" id="349124.Hhal_1752"/>
<dbReference type="KEGG" id="hha:Hhal_1752"/>
<dbReference type="eggNOG" id="COG1007">
    <property type="taxonomic scope" value="Bacteria"/>
</dbReference>
<dbReference type="HOGENOM" id="CLU_007100_1_3_6"/>
<dbReference type="OrthoDB" id="9768329at2"/>
<dbReference type="Proteomes" id="UP000000647">
    <property type="component" value="Chromosome"/>
</dbReference>
<dbReference type="GO" id="GO:0005886">
    <property type="term" value="C:plasma membrane"/>
    <property type="evidence" value="ECO:0007669"/>
    <property type="project" value="UniProtKB-SubCell"/>
</dbReference>
<dbReference type="GO" id="GO:0008137">
    <property type="term" value="F:NADH dehydrogenase (ubiquinone) activity"/>
    <property type="evidence" value="ECO:0007669"/>
    <property type="project" value="InterPro"/>
</dbReference>
<dbReference type="GO" id="GO:0050136">
    <property type="term" value="F:NADH:ubiquinone reductase (non-electrogenic) activity"/>
    <property type="evidence" value="ECO:0007669"/>
    <property type="project" value="UniProtKB-UniRule"/>
</dbReference>
<dbReference type="GO" id="GO:0048038">
    <property type="term" value="F:quinone binding"/>
    <property type="evidence" value="ECO:0007669"/>
    <property type="project" value="UniProtKB-KW"/>
</dbReference>
<dbReference type="GO" id="GO:0042773">
    <property type="term" value="P:ATP synthesis coupled electron transport"/>
    <property type="evidence" value="ECO:0007669"/>
    <property type="project" value="InterPro"/>
</dbReference>
<dbReference type="HAMAP" id="MF_00445">
    <property type="entry name" value="NDH1_NuoN_1"/>
    <property type="match status" value="1"/>
</dbReference>
<dbReference type="InterPro" id="IPR010096">
    <property type="entry name" value="NADH-Q_OxRdtase_suN/2"/>
</dbReference>
<dbReference type="InterPro" id="IPR001750">
    <property type="entry name" value="ND/Mrp_TM"/>
</dbReference>
<dbReference type="NCBIfam" id="TIGR01770">
    <property type="entry name" value="NDH_I_N"/>
    <property type="match status" value="1"/>
</dbReference>
<dbReference type="NCBIfam" id="NF004442">
    <property type="entry name" value="PRK05777.1-5"/>
    <property type="match status" value="1"/>
</dbReference>
<dbReference type="PANTHER" id="PTHR22773">
    <property type="entry name" value="NADH DEHYDROGENASE"/>
    <property type="match status" value="1"/>
</dbReference>
<dbReference type="Pfam" id="PF00361">
    <property type="entry name" value="Proton_antipo_M"/>
    <property type="match status" value="1"/>
</dbReference>
<dbReference type="PRINTS" id="PR01434">
    <property type="entry name" value="NADHDHGNASE5"/>
</dbReference>
<feature type="chain" id="PRO_0000391157" description="NADH-quinone oxidoreductase subunit N">
    <location>
        <begin position="1"/>
        <end position="484"/>
    </location>
</feature>
<feature type="transmembrane region" description="Helical" evidence="1">
    <location>
        <begin position="10"/>
        <end position="30"/>
    </location>
</feature>
<feature type="transmembrane region" description="Helical" evidence="1">
    <location>
        <begin position="40"/>
        <end position="60"/>
    </location>
</feature>
<feature type="transmembrane region" description="Helical" evidence="1">
    <location>
        <begin position="74"/>
        <end position="94"/>
    </location>
</feature>
<feature type="transmembrane region" description="Helical" evidence="1">
    <location>
        <begin position="108"/>
        <end position="128"/>
    </location>
</feature>
<feature type="transmembrane region" description="Helical" evidence="1">
    <location>
        <begin position="129"/>
        <end position="149"/>
    </location>
</feature>
<feature type="transmembrane region" description="Helical" evidence="1">
    <location>
        <begin position="163"/>
        <end position="183"/>
    </location>
</feature>
<feature type="transmembrane region" description="Helical" evidence="1">
    <location>
        <begin position="203"/>
        <end position="223"/>
    </location>
</feature>
<feature type="transmembrane region" description="Helical" evidence="1">
    <location>
        <begin position="237"/>
        <end position="257"/>
    </location>
</feature>
<feature type="transmembrane region" description="Helical" evidence="1">
    <location>
        <begin position="272"/>
        <end position="292"/>
    </location>
</feature>
<feature type="transmembrane region" description="Helical" evidence="1">
    <location>
        <begin position="299"/>
        <end position="319"/>
    </location>
</feature>
<feature type="transmembrane region" description="Helical" evidence="1">
    <location>
        <begin position="327"/>
        <end position="347"/>
    </location>
</feature>
<feature type="transmembrane region" description="Helical" evidence="1">
    <location>
        <begin position="370"/>
        <end position="390"/>
    </location>
</feature>
<feature type="transmembrane region" description="Helical" evidence="1">
    <location>
        <begin position="404"/>
        <end position="424"/>
    </location>
</feature>
<accession>A1WXV4</accession>
<name>NUON_HALHL</name>
<evidence type="ECO:0000255" key="1">
    <source>
        <dbReference type="HAMAP-Rule" id="MF_00445"/>
    </source>
</evidence>
<reference key="1">
    <citation type="submission" date="2006-12" db="EMBL/GenBank/DDBJ databases">
        <title>Complete sequence of Halorhodospira halophila SL1.</title>
        <authorList>
            <consortium name="US DOE Joint Genome Institute"/>
            <person name="Copeland A."/>
            <person name="Lucas S."/>
            <person name="Lapidus A."/>
            <person name="Barry K."/>
            <person name="Detter J.C."/>
            <person name="Glavina del Rio T."/>
            <person name="Hammon N."/>
            <person name="Israni S."/>
            <person name="Dalin E."/>
            <person name="Tice H."/>
            <person name="Pitluck S."/>
            <person name="Saunders E."/>
            <person name="Brettin T."/>
            <person name="Bruce D."/>
            <person name="Han C."/>
            <person name="Tapia R."/>
            <person name="Schmutz J."/>
            <person name="Larimer F."/>
            <person name="Land M."/>
            <person name="Hauser L."/>
            <person name="Kyrpides N."/>
            <person name="Mikhailova N."/>
            <person name="Hoff W."/>
            <person name="Richardson P."/>
        </authorList>
    </citation>
    <scope>NUCLEOTIDE SEQUENCE [LARGE SCALE GENOMIC DNA]</scope>
    <source>
        <strain>DSM 244 / SL1</strain>
    </source>
</reference>
<keyword id="KW-0997">Cell inner membrane</keyword>
<keyword id="KW-1003">Cell membrane</keyword>
<keyword id="KW-0472">Membrane</keyword>
<keyword id="KW-0520">NAD</keyword>
<keyword id="KW-0874">Quinone</keyword>
<keyword id="KW-1185">Reference proteome</keyword>
<keyword id="KW-1278">Translocase</keyword>
<keyword id="KW-0812">Transmembrane</keyword>
<keyword id="KW-1133">Transmembrane helix</keyword>
<keyword id="KW-0813">Transport</keyword>
<keyword id="KW-0830">Ubiquinone</keyword>
<proteinExistence type="inferred from homology"/>
<organism>
    <name type="scientific">Halorhodospira halophila (strain DSM 244 / SL1)</name>
    <name type="common">Ectothiorhodospira halophila (strain DSM 244 / SL1)</name>
    <dbReference type="NCBI Taxonomy" id="349124"/>
    <lineage>
        <taxon>Bacteria</taxon>
        <taxon>Pseudomonadati</taxon>
        <taxon>Pseudomonadota</taxon>
        <taxon>Gammaproteobacteria</taxon>
        <taxon>Chromatiales</taxon>
        <taxon>Ectothiorhodospiraceae</taxon>
        <taxon>Halorhodospira</taxon>
    </lineage>
</organism>
<comment type="function">
    <text evidence="1">NDH-1 shuttles electrons from NADH, via FMN and iron-sulfur (Fe-S) centers, to quinones in the respiratory chain. The immediate electron acceptor for the enzyme in this species is believed to be ubiquinone. Couples the redox reaction to proton translocation (for every two electrons transferred, four hydrogen ions are translocated across the cytoplasmic membrane), and thus conserves the redox energy in a proton gradient.</text>
</comment>
<comment type="catalytic activity">
    <reaction evidence="1">
        <text>a quinone + NADH + 5 H(+)(in) = a quinol + NAD(+) + 4 H(+)(out)</text>
        <dbReference type="Rhea" id="RHEA:57888"/>
        <dbReference type="ChEBI" id="CHEBI:15378"/>
        <dbReference type="ChEBI" id="CHEBI:24646"/>
        <dbReference type="ChEBI" id="CHEBI:57540"/>
        <dbReference type="ChEBI" id="CHEBI:57945"/>
        <dbReference type="ChEBI" id="CHEBI:132124"/>
    </reaction>
</comment>
<comment type="subunit">
    <text evidence="1">NDH-1 is composed of 14 different subunits. Subunits NuoA, H, J, K, L, M, N constitute the membrane sector of the complex.</text>
</comment>
<comment type="subcellular location">
    <subcellularLocation>
        <location evidence="1">Cell inner membrane</location>
        <topology evidence="1">Multi-pass membrane protein</topology>
    </subcellularLocation>
</comment>
<comment type="similarity">
    <text evidence="1">Belongs to the complex I subunit 2 family.</text>
</comment>
<sequence length="484" mass="51073">MSFETPDFSLALPEIWLLAATCGVLVVDLFSSDPRRSATFYLTQGALLVTAVLALSTQWGVNEVTFSGHYMADSLGAVVKASVALLSVLALAYTRPYLGDRGLLQGEFYLLALFANLGMLVIASGGSLLSLYLGLELLSLALYALVAYHRDSRQAAEAAMKYFVLGSLASGILLYGMSMVYGATASLELSVIAEVAGRHSDPLMLLFGVVFMLVGVAFKLGAAPFHAWVPDVYQGAPTPVTLFLSTAPKVAAVALFMRLLVDGLGPMHEQLEPMLMILAVASLLVGNLIAIVQTNFKRMLAYSAIAHAGFIMVGFTAGTDAGHAAALFYTIAYSIMAAGAFGMITVLARSGFEAEEIADLRGLNERHPVYAGVLLLVLVSMTGIPGTVGFYAKYLVLQAAVEAGHIPLAIFAVVAAVVGAFYYLRVLKVVYFDRPEAEVDADTLPAPGASSAIRSLVVVNGVAVLVLGIFPERLIALCQAALGL</sequence>
<gene>
    <name evidence="1" type="primary">nuoN</name>
    <name type="ordered locus">Hhal_1752</name>
</gene>